<protein>
    <recommendedName>
        <fullName evidence="7">Triacylglycerol lipase</fullName>
        <ecNumber evidence="11">3.1.1.3</ecNumber>
    </recommendedName>
    <alternativeName>
        <fullName evidence="7">Extracellular lipase</fullName>
    </alternativeName>
    <alternativeName>
        <fullName evidence="6">Triacylglycerol ester hydrolase</fullName>
    </alternativeName>
</protein>
<sequence length="311" mass="32723">MKKKSLLPLGLAIGLASLAASPLIQASTYTQTKYPIVLAHGMLGFDNILGVDYWFGIPSALRRDGAQVYVTEVSQLDTSEVRGEQLLQQVEEIVALSGQPKVNLIGHSHGGPTIRYVAAVRPDLIASATSVGAPHKGSDTADFLRQIPPGSAGEAVLSGLVNSLGALISFLSSGSTGTQNSLGSLESLNSEGAARFNAKYPQGIPTSACGEGAYKVNGVSYYSWSGSSPLTNFLDPSDAFLGASSLTFKNGTANDGLVGTCSSHLGMVIRDNYRMNHLDEVNQVFGLTSLFETSPVSVYRQHANRLKNASL</sequence>
<name>LIP_PSEAE</name>
<organism>
    <name type="scientific">Pseudomonas aeruginosa (strain ATCC 15692 / DSM 22644 / CIP 104116 / JCM 14847 / LMG 12228 / 1C / PRS 101 / PAO1)</name>
    <dbReference type="NCBI Taxonomy" id="208964"/>
    <lineage>
        <taxon>Bacteria</taxon>
        <taxon>Pseudomonadati</taxon>
        <taxon>Pseudomonadota</taxon>
        <taxon>Gammaproteobacteria</taxon>
        <taxon>Pseudomonadales</taxon>
        <taxon>Pseudomonadaceae</taxon>
        <taxon>Pseudomonas</taxon>
    </lineage>
</organism>
<reference key="1">
    <citation type="journal article" date="1992" name="J. Gen. Microbiol.">
        <title>Molecular genetics of the extracellular lipase of Pseudomonas aeruginosa PAO1.</title>
        <authorList>
            <person name="Wohlfarth S."/>
            <person name="Hoesche C."/>
            <person name="Strunk C."/>
            <person name="Winkler U.K."/>
        </authorList>
    </citation>
    <scope>NUCLEOTIDE SEQUENCE [GENOMIC DNA]</scope>
    <source>
        <strain>ATCC 15692 / DSM 22644 / CIP 104116 / JCM 14847 / LMG 12228 / 1C / PRS 101 / PAO1</strain>
    </source>
</reference>
<reference key="2">
    <citation type="journal article" date="1992" name="Arch. Biochem. Biophys.">
        <title>Purification, molecular cloning, and expression of lipase from Pseudomonas aeruginosa.</title>
        <authorList>
            <person name="Chihara-Siomi M."/>
            <person name="Yoshikawa K."/>
            <person name="Oshima-Hirayama N."/>
            <person name="Yamamoto K."/>
            <person name="Sogabe Y."/>
            <person name="Nakatani T."/>
            <person name="Nishioka T."/>
            <person name="Oda J."/>
        </authorList>
    </citation>
    <scope>NUCLEOTIDE SEQUENCE [GENOMIC DNA]</scope>
    <scope>PARTIAL PROTEIN SEQUENCE</scope>
    <scope>FUNCTION</scope>
    <scope>ACTIVE SITE</scope>
    <source>
        <strain>TE3285</strain>
    </source>
</reference>
<reference key="3">
    <citation type="journal article" date="1992" name="Biochim. Biophys. Acta">
        <title>Extracellular lipase from Pseudomonas aeruginosa is an amphiphilic protein.</title>
        <authorList>
            <person name="Jaeger K.-E."/>
            <person name="Adrian F.-J."/>
            <person name="Meyer H.E."/>
            <person name="Hancock R.E.W."/>
            <person name="Winkler U.K."/>
        </authorList>
    </citation>
    <scope>NUCLEOTIDE SEQUENCE [GENOMIC DNA]</scope>
    <scope>PROTEIN SEQUENCE OF 27-57</scope>
    <scope>ACTIVITY REGULATION</scope>
    <scope>SUBCELLULAR LOCATION</scope>
    <source>
        <strain>PAC1R</strain>
    </source>
</reference>
<reference key="4">
    <citation type="journal article" date="2000" name="Nature">
        <title>Complete genome sequence of Pseudomonas aeruginosa PAO1, an opportunistic pathogen.</title>
        <authorList>
            <person name="Stover C.K."/>
            <person name="Pham X.-Q.T."/>
            <person name="Erwin A.L."/>
            <person name="Mizoguchi S.D."/>
            <person name="Warrener P."/>
            <person name="Hickey M.J."/>
            <person name="Brinkman F.S.L."/>
            <person name="Hufnagle W.O."/>
            <person name="Kowalik D.J."/>
            <person name="Lagrou M."/>
            <person name="Garber R.L."/>
            <person name="Goltry L."/>
            <person name="Tolentino E."/>
            <person name="Westbrock-Wadman S."/>
            <person name="Yuan Y."/>
            <person name="Brody L.L."/>
            <person name="Coulter S.N."/>
            <person name="Folger K.R."/>
            <person name="Kas A."/>
            <person name="Larbig K."/>
            <person name="Lim R.M."/>
            <person name="Smith K.A."/>
            <person name="Spencer D.H."/>
            <person name="Wong G.K.-S."/>
            <person name="Wu Z."/>
            <person name="Paulsen I.T."/>
            <person name="Reizer J."/>
            <person name="Saier M.H. Jr."/>
            <person name="Hancock R.E.W."/>
            <person name="Lory S."/>
            <person name="Olson M.V."/>
        </authorList>
    </citation>
    <scope>NUCLEOTIDE SEQUENCE [LARGE SCALE GENOMIC DNA]</scope>
    <source>
        <strain>ATCC 15692 / DSM 22644 / CIP 104116 / JCM 14847 / LMG 12228 / 1C / PRS 101 / PAO1</strain>
    </source>
</reference>
<reference key="5">
    <citation type="journal article" date="1991" name="J. Gen. Microbiol.">
        <title>Purification and properties of extracellular lipase from Pseudomonas aeruginosa EF2.</title>
        <authorList>
            <person name="Gilbert E.J."/>
            <person name="Cornish A."/>
            <person name="Jones C.W."/>
        </authorList>
    </citation>
    <scope>PROTEIN SEQUENCE OF 28-39</scope>
    <scope>FUNCTION</scope>
    <scope>CATALYTIC ACTIVITY</scope>
    <scope>BIOPHYSICOCHEMICAL PROPERTIES</scope>
    <scope>ACTIVITY REGULATION</scope>
    <scope>SUBSTRATE SPECIFICITY</scope>
    <scope>SUBUNIT</scope>
    <source>
        <strain>EF2</strain>
    </source>
</reference>
<reference key="6">
    <citation type="journal article" date="2001" name="J. Bacteriol.">
        <title>Disulfide bond in Pseudomonas aeruginosa lipase stabilizes the structure but is not required for interaction with its foldase.</title>
        <authorList>
            <person name="Liebeton K."/>
            <person name="Zacharias A."/>
            <person name="Jaeger K.-E."/>
        </authorList>
    </citation>
    <scope>MUTAGENESIS OF CYS-209 AND CYS-261</scope>
    <scope>DISULFIDE BOND</scope>
</reference>
<reference key="7">
    <citation type="journal article" date="2000" name="J. Biol. Chem.">
        <title>Crystal structure of Pseudomonas aeruginosa lipase in the open conformation. The prototype for family I.1 of bacterial lipases.</title>
        <authorList>
            <person name="Nardini M."/>
            <person name="Lang D.A."/>
            <person name="Liebeton K."/>
            <person name="Jaeger K.-E."/>
            <person name="Dijkstra B.W."/>
        </authorList>
    </citation>
    <scope>X-RAY CRYSTALLOGRAPHY (2.54 ANGSTROMS) OF COMPLEX WITH SUBSTRATE ANALOG AND CALCIUM ION</scope>
    <scope>ACTIVE SITE</scope>
    <scope>COFACTOR</scope>
    <scope>DISULFIDE BOND</scope>
    <source>
        <strain>ATCC 15692 / DSM 22644 / CIP 104116 / JCM 14847 / LMG 12228 / 1C / PRS 101 / PAO1</strain>
    </source>
</reference>
<evidence type="ECO:0000255" key="1"/>
<evidence type="ECO:0000269" key="2">
    <source>
    </source>
</evidence>
<evidence type="ECO:0000269" key="3">
    <source>
    </source>
</evidence>
<evidence type="ECO:0000269" key="4">
    <source>
    </source>
</evidence>
<evidence type="ECO:0000269" key="5">
    <source>
    </source>
</evidence>
<evidence type="ECO:0000303" key="6">
    <source>
    </source>
</evidence>
<evidence type="ECO:0000303" key="7">
    <source>
    </source>
</evidence>
<evidence type="ECO:0000305" key="8"/>
<evidence type="ECO:0000305" key="9">
    <source>
    </source>
</evidence>
<evidence type="ECO:0000305" key="10">
    <source>
    </source>
</evidence>
<evidence type="ECO:0000305" key="11">
    <source>
    </source>
</evidence>
<evidence type="ECO:0007744" key="12">
    <source>
        <dbReference type="PDB" id="1EX9"/>
    </source>
</evidence>
<evidence type="ECO:0007829" key="13">
    <source>
        <dbReference type="PDB" id="1EX9"/>
    </source>
</evidence>
<gene>
    <name evidence="8" type="primary">lip</name>
    <name evidence="6" type="synonym">lipA</name>
    <name type="ordered locus">PA2862</name>
</gene>
<dbReference type="EC" id="3.1.1.3" evidence="11"/>
<dbReference type="EMBL" id="X63390">
    <property type="protein sequence ID" value="CAA44997.1"/>
    <property type="molecule type" value="Genomic_DNA"/>
</dbReference>
<dbReference type="EMBL" id="AB008452">
    <property type="protein sequence ID" value="BAA23128.1"/>
    <property type="molecule type" value="Genomic_DNA"/>
</dbReference>
<dbReference type="EMBL" id="AX000441">
    <property type="protein sequence ID" value="CAB77076.1"/>
    <property type="molecule type" value="Unassigned_DNA"/>
</dbReference>
<dbReference type="EMBL" id="AE004091">
    <property type="protein sequence ID" value="AAG06250.1"/>
    <property type="molecule type" value="Genomic_DNA"/>
</dbReference>
<dbReference type="PIR" id="S25768">
    <property type="entry name" value="S25768"/>
</dbReference>
<dbReference type="RefSeq" id="NP_251552.1">
    <property type="nucleotide sequence ID" value="NC_002516.2"/>
</dbReference>
<dbReference type="RefSeq" id="WP_003090955.1">
    <property type="nucleotide sequence ID" value="NZ_QZGE01000011.1"/>
</dbReference>
<dbReference type="PDB" id="1EX9">
    <property type="method" value="X-ray"/>
    <property type="resolution" value="2.54 A"/>
    <property type="chains" value="A=27-311"/>
</dbReference>
<dbReference type="PDBsum" id="1EX9"/>
<dbReference type="SMR" id="P26876"/>
<dbReference type="STRING" id="208964.PA2862"/>
<dbReference type="ESTHER" id="pseae-llipa">
    <property type="family name" value="Bacterial_lip_FamI.1"/>
</dbReference>
<dbReference type="PaxDb" id="208964-PA2862"/>
<dbReference type="DNASU" id="882662"/>
<dbReference type="GeneID" id="882662"/>
<dbReference type="KEGG" id="pae:PA2862"/>
<dbReference type="PATRIC" id="fig|208964.12.peg.3002"/>
<dbReference type="PseudoCAP" id="PA2862"/>
<dbReference type="HOGENOM" id="CLU_062016_0_0_6"/>
<dbReference type="InParanoid" id="P26876"/>
<dbReference type="OrthoDB" id="2004167at2"/>
<dbReference type="PhylomeDB" id="P26876"/>
<dbReference type="BioCyc" id="PAER208964:G1FZ6-2912-MONOMER"/>
<dbReference type="BRENDA" id="3.1.1.3">
    <property type="organism ID" value="5087"/>
</dbReference>
<dbReference type="EvolutionaryTrace" id="P26876"/>
<dbReference type="Proteomes" id="UP000002438">
    <property type="component" value="Chromosome"/>
</dbReference>
<dbReference type="GO" id="GO:0005576">
    <property type="term" value="C:extracellular region"/>
    <property type="evidence" value="ECO:0007669"/>
    <property type="project" value="UniProtKB-SubCell"/>
</dbReference>
<dbReference type="GO" id="GO:0016298">
    <property type="term" value="F:lipase activity"/>
    <property type="evidence" value="ECO:0000314"/>
    <property type="project" value="PseudoCAP"/>
</dbReference>
<dbReference type="GO" id="GO:0046872">
    <property type="term" value="F:metal ion binding"/>
    <property type="evidence" value="ECO:0007669"/>
    <property type="project" value="UniProtKB-KW"/>
</dbReference>
<dbReference type="GO" id="GO:0004806">
    <property type="term" value="F:triacylglycerol lipase activity"/>
    <property type="evidence" value="ECO:0007669"/>
    <property type="project" value="UniProtKB-EC"/>
</dbReference>
<dbReference type="GO" id="GO:0016042">
    <property type="term" value="P:lipid catabolic process"/>
    <property type="evidence" value="ECO:0007669"/>
    <property type="project" value="UniProtKB-KW"/>
</dbReference>
<dbReference type="GO" id="GO:0015628">
    <property type="term" value="P:protein secretion by the type II secretion system"/>
    <property type="evidence" value="ECO:0000314"/>
    <property type="project" value="PseudoCAP"/>
</dbReference>
<dbReference type="GO" id="GO:0043952">
    <property type="term" value="P:protein transport by the Sec complex"/>
    <property type="evidence" value="ECO:0000314"/>
    <property type="project" value="PseudoCAP"/>
</dbReference>
<dbReference type="FunFam" id="3.40.50.1820:FF:000229">
    <property type="entry name" value="Lactonizing lipase"/>
    <property type="match status" value="1"/>
</dbReference>
<dbReference type="Gene3D" id="3.40.50.1820">
    <property type="entry name" value="alpha/beta hydrolase"/>
    <property type="match status" value="1"/>
</dbReference>
<dbReference type="InterPro" id="IPR000073">
    <property type="entry name" value="AB_hydrolase_1"/>
</dbReference>
<dbReference type="InterPro" id="IPR029058">
    <property type="entry name" value="AB_hydrolase_fold"/>
</dbReference>
<dbReference type="Pfam" id="PF00561">
    <property type="entry name" value="Abhydrolase_1"/>
    <property type="match status" value="1"/>
</dbReference>
<dbReference type="SUPFAM" id="SSF53474">
    <property type="entry name" value="alpha/beta-Hydrolases"/>
    <property type="match status" value="1"/>
</dbReference>
<dbReference type="PROSITE" id="PS00120">
    <property type="entry name" value="LIPASE_SER"/>
    <property type="match status" value="1"/>
</dbReference>
<accession>P26876</accession>
<keyword id="KW-0002">3D-structure</keyword>
<keyword id="KW-0106">Calcium</keyword>
<keyword id="KW-0903">Direct protein sequencing</keyword>
<keyword id="KW-1015">Disulfide bond</keyword>
<keyword id="KW-0378">Hydrolase</keyword>
<keyword id="KW-0442">Lipid degradation</keyword>
<keyword id="KW-0443">Lipid metabolism</keyword>
<keyword id="KW-0479">Metal-binding</keyword>
<keyword id="KW-1185">Reference proteome</keyword>
<keyword id="KW-0964">Secreted</keyword>
<keyword id="KW-0732">Signal</keyword>
<comment type="function">
    <text evidence="5 10">Catalyzes the hydrolysis of triacylglycerol (PubMed:1748875). It also exhibits some esterase activity with p-nitrophenyl acetate and Tween 80 as substrates, however the lipase activity is approximately eight times the esterase activity (PubMed:1748875). It shows a marked specificity for the 1,3-oleyl residues of triolein (PubMed:1748875).</text>
</comment>
<comment type="catalytic activity">
    <reaction evidence="11">
        <text>a triacylglycerol + H2O = a diacylglycerol + a fatty acid + H(+)</text>
        <dbReference type="Rhea" id="RHEA:12044"/>
        <dbReference type="ChEBI" id="CHEBI:15377"/>
        <dbReference type="ChEBI" id="CHEBI:15378"/>
        <dbReference type="ChEBI" id="CHEBI:17855"/>
        <dbReference type="ChEBI" id="CHEBI:18035"/>
        <dbReference type="ChEBI" id="CHEBI:28868"/>
        <dbReference type="EC" id="3.1.1.3"/>
    </reaction>
</comment>
<comment type="cofactor">
    <cofactor evidence="2">
        <name>Ca(2+)</name>
        <dbReference type="ChEBI" id="CHEBI:29108"/>
    </cofactor>
    <text evidence="2">Binds 1 Ca(2+) ion per subunit.</text>
</comment>
<comment type="activity regulation">
    <text evidence="4 5">Na(+) increases lipase activity (PubMed:1748875). Inhibited by diethyl p-nitrophenyl phosphate and 3,4-dichloroisocoumarin (DCI) (PubMed:1576157, PubMed:1748875).</text>
</comment>
<comment type="biophysicochemical properties">
    <phDependence>
        <text evidence="5">Optimum pH is 8.5-9.</text>
    </phDependence>
    <temperatureDependence>
        <text evidence="5">Optimum temperature is 50 degrees Celsius.</text>
    </temperatureDependence>
</comment>
<comment type="subunit">
    <text evidence="5">Monomer.</text>
</comment>
<comment type="subcellular location">
    <subcellularLocation>
        <location evidence="4">Secreted</location>
    </subcellularLocation>
    <text evidence="4">During early stationary growth phase about 10% of the enzyme molecules remain cell-bound while about 90% are released into the growth medium.</text>
</comment>
<comment type="similarity">
    <text evidence="8">Belongs to the AB hydrolase superfamily. Pseudomonas lipase family.</text>
</comment>
<feature type="signal peptide" evidence="4">
    <location>
        <begin position="1"/>
        <end position="26"/>
    </location>
</feature>
<feature type="chain" id="PRO_0000017739" description="Triacylglycerol lipase">
    <location>
        <begin position="27"/>
        <end position="311"/>
    </location>
</feature>
<feature type="domain" description="AB hydrolase-1" evidence="1">
    <location>
        <begin position="35"/>
        <end position="280"/>
    </location>
</feature>
<feature type="active site" description="Nucleophile" evidence="9 10 12">
    <location>
        <position position="108"/>
    </location>
</feature>
<feature type="active site" description="Charge relay system" evidence="9 10 12">
    <location>
        <position position="255"/>
    </location>
</feature>
<feature type="active site" description="Charge relay system" evidence="9 10 12">
    <location>
        <position position="277"/>
    </location>
</feature>
<feature type="binding site" evidence="2 12">
    <location>
        <position position="42"/>
    </location>
    <ligand>
        <name>substrate</name>
    </ligand>
</feature>
<feature type="binding site" evidence="2 12">
    <location>
        <position position="109"/>
    </location>
    <ligand>
        <name>substrate</name>
    </ligand>
</feature>
<feature type="binding site" evidence="2 12">
    <location>
        <position position="235"/>
    </location>
    <ligand>
        <name>Ca(2+)</name>
        <dbReference type="ChEBI" id="CHEBI:29108"/>
    </ligand>
</feature>
<feature type="binding site" evidence="2 12">
    <location>
        <position position="279"/>
    </location>
    <ligand>
        <name>Ca(2+)</name>
        <dbReference type="ChEBI" id="CHEBI:29108"/>
    </ligand>
</feature>
<feature type="binding site" evidence="2 12">
    <location>
        <position position="283"/>
    </location>
    <ligand>
        <name>Ca(2+)</name>
        <dbReference type="ChEBI" id="CHEBI:29108"/>
    </ligand>
</feature>
<feature type="binding site" evidence="2 12">
    <location>
        <position position="287"/>
    </location>
    <ligand>
        <name>Ca(2+)</name>
        <dbReference type="ChEBI" id="CHEBI:29108"/>
    </ligand>
</feature>
<feature type="disulfide bond" evidence="2 3 12">
    <location>
        <begin position="209"/>
        <end position="261"/>
    </location>
</feature>
<feature type="sequence variant" description="In strain: EF2.">
    <original>K</original>
    <variation>Q</variation>
    <location>
        <position position="33"/>
    </location>
</feature>
<feature type="sequence variant" description="In strain: TE3285.">
    <original>V</original>
    <variation>I</variation>
    <location>
        <position position="156"/>
    </location>
</feature>
<feature type="sequence variant" description="In strain: TE3285.">
    <original>Q</original>
    <variation>H</variation>
    <location>
        <position position="202"/>
    </location>
</feature>
<feature type="sequence variant" description="In strain: TE3285.">
    <original>I</original>
    <variation>V</variation>
    <location>
        <position position="204"/>
    </location>
</feature>
<feature type="mutagenesis site" description="Loss of lipase activity." evidence="3">
    <original>C</original>
    <variation>S</variation>
    <location>
        <position position="209"/>
    </location>
</feature>
<feature type="mutagenesis site" description="Loss of lipase activity." evidence="3">
    <original>C</original>
    <variation>S</variation>
    <location>
        <position position="261"/>
    </location>
</feature>
<feature type="strand" evidence="13">
    <location>
        <begin position="36"/>
        <end position="39"/>
    </location>
</feature>
<feature type="strand" evidence="13">
    <location>
        <begin position="46"/>
        <end position="48"/>
    </location>
</feature>
<feature type="strand" evidence="13">
    <location>
        <begin position="51"/>
        <end position="54"/>
    </location>
</feature>
<feature type="helix" evidence="13">
    <location>
        <begin position="57"/>
        <end position="63"/>
    </location>
</feature>
<feature type="strand" evidence="13">
    <location>
        <begin position="68"/>
        <end position="71"/>
    </location>
</feature>
<feature type="strand" evidence="13">
    <location>
        <begin position="75"/>
        <end position="77"/>
    </location>
</feature>
<feature type="helix" evidence="13">
    <location>
        <begin position="79"/>
        <end position="97"/>
    </location>
</feature>
<feature type="strand" evidence="13">
    <location>
        <begin position="102"/>
        <end position="107"/>
    </location>
</feature>
<feature type="helix" evidence="13">
    <location>
        <begin position="110"/>
        <end position="120"/>
    </location>
</feature>
<feature type="helix" evidence="13">
    <location>
        <begin position="122"/>
        <end position="124"/>
    </location>
</feature>
<feature type="strand" evidence="13">
    <location>
        <begin position="125"/>
        <end position="132"/>
    </location>
</feature>
<feature type="helix" evidence="13">
    <location>
        <begin position="139"/>
        <end position="143"/>
    </location>
</feature>
<feature type="helix" evidence="13">
    <location>
        <begin position="144"/>
        <end position="146"/>
    </location>
</feature>
<feature type="helix" evidence="13">
    <location>
        <begin position="152"/>
        <end position="173"/>
    </location>
</feature>
<feature type="helix" evidence="13">
    <location>
        <begin position="181"/>
        <end position="188"/>
    </location>
</feature>
<feature type="helix" evidence="13">
    <location>
        <begin position="190"/>
        <end position="199"/>
    </location>
</feature>
<feature type="strand" evidence="13">
    <location>
        <begin position="206"/>
        <end position="210"/>
    </location>
</feature>
<feature type="strand" evidence="13">
    <location>
        <begin position="214"/>
        <end position="216"/>
    </location>
</feature>
<feature type="strand" evidence="13">
    <location>
        <begin position="219"/>
        <end position="224"/>
    </location>
</feature>
<feature type="helix" evidence="13">
    <location>
        <begin position="237"/>
        <end position="244"/>
    </location>
</feature>
<feature type="helix" evidence="13">
    <location>
        <begin position="245"/>
        <end position="247"/>
    </location>
</feature>
<feature type="strand" evidence="13">
    <location>
        <begin position="254"/>
        <end position="259"/>
    </location>
</feature>
<feature type="turn" evidence="13">
    <location>
        <begin position="260"/>
        <end position="263"/>
    </location>
</feature>
<feature type="strand" evidence="13">
    <location>
        <begin position="266"/>
        <end position="269"/>
    </location>
</feature>
<feature type="helix" evidence="13">
    <location>
        <begin position="279"/>
        <end position="281"/>
    </location>
</feature>
<feature type="turn" evidence="13">
    <location>
        <begin position="282"/>
        <end position="286"/>
    </location>
</feature>
<feature type="helix" evidence="13">
    <location>
        <begin position="295"/>
        <end position="308"/>
    </location>
</feature>
<proteinExistence type="evidence at protein level"/>